<gene>
    <name evidence="1" type="primary">dapB</name>
    <name type="ordered locus">Ecaj_0579</name>
</gene>
<proteinExistence type="inferred from homology"/>
<organism>
    <name type="scientific">Ehrlichia canis (strain Jake)</name>
    <dbReference type="NCBI Taxonomy" id="269484"/>
    <lineage>
        <taxon>Bacteria</taxon>
        <taxon>Pseudomonadati</taxon>
        <taxon>Pseudomonadota</taxon>
        <taxon>Alphaproteobacteria</taxon>
        <taxon>Rickettsiales</taxon>
        <taxon>Anaplasmataceae</taxon>
        <taxon>Ehrlichia</taxon>
    </lineage>
</organism>
<comment type="function">
    <text evidence="1">Catalyzes the conversion of 4-hydroxy-tetrahydrodipicolinate (HTPA) to tetrahydrodipicolinate.</text>
</comment>
<comment type="catalytic activity">
    <reaction evidence="1">
        <text>(S)-2,3,4,5-tetrahydrodipicolinate + NAD(+) + H2O = (2S,4S)-4-hydroxy-2,3,4,5-tetrahydrodipicolinate + NADH + H(+)</text>
        <dbReference type="Rhea" id="RHEA:35323"/>
        <dbReference type="ChEBI" id="CHEBI:15377"/>
        <dbReference type="ChEBI" id="CHEBI:15378"/>
        <dbReference type="ChEBI" id="CHEBI:16845"/>
        <dbReference type="ChEBI" id="CHEBI:57540"/>
        <dbReference type="ChEBI" id="CHEBI:57945"/>
        <dbReference type="ChEBI" id="CHEBI:67139"/>
        <dbReference type="EC" id="1.17.1.8"/>
    </reaction>
</comment>
<comment type="catalytic activity">
    <reaction evidence="1">
        <text>(S)-2,3,4,5-tetrahydrodipicolinate + NADP(+) + H2O = (2S,4S)-4-hydroxy-2,3,4,5-tetrahydrodipicolinate + NADPH + H(+)</text>
        <dbReference type="Rhea" id="RHEA:35331"/>
        <dbReference type="ChEBI" id="CHEBI:15377"/>
        <dbReference type="ChEBI" id="CHEBI:15378"/>
        <dbReference type="ChEBI" id="CHEBI:16845"/>
        <dbReference type="ChEBI" id="CHEBI:57783"/>
        <dbReference type="ChEBI" id="CHEBI:58349"/>
        <dbReference type="ChEBI" id="CHEBI:67139"/>
        <dbReference type="EC" id="1.17.1.8"/>
    </reaction>
</comment>
<comment type="pathway">
    <text evidence="1">Amino-acid biosynthesis; L-lysine biosynthesis via DAP pathway; (S)-tetrahydrodipicolinate from L-aspartate: step 4/4.</text>
</comment>
<comment type="subcellular location">
    <subcellularLocation>
        <location evidence="1">Cytoplasm</location>
    </subcellularLocation>
</comment>
<comment type="similarity">
    <text evidence="1">Belongs to the DapB family.</text>
</comment>
<comment type="caution">
    <text evidence="2">Was originally thought to be a dihydrodipicolinate reductase (DHDPR), catalyzing the conversion of dihydrodipicolinate to tetrahydrodipicolinate. However, it was shown in E.coli that the substrate of the enzymatic reaction is not dihydrodipicolinate (DHDP) but in fact (2S,4S)-4-hydroxy-2,3,4,5-tetrahydrodipicolinic acid (HTPA), the product released by the DapA-catalyzed reaction.</text>
</comment>
<sequence>MTKVNIGIVGCLGKQGKRLVAEISASPNAQVSAGLVRPGNPYVGQVLGEIVGCNCSAKAIDSLEHLFDVSDIVVEFTNPQTLLECIKMAESKKKPLLSGTTGPAATEMVFEDYIKNIPFLWTTNVSFGVNILAKLVEEAARKLFDYDIEVWEMHHRYKKDSPSGTSLILGRAAAKGRNVPFKKAQYVSGTPQEARQDVNTIGYAVSRGGSDLSDHRIMFVSDEEMIDFNHRTLNKNLYAKGALKAALWLVKQPPGVYTMSDMMAAAE</sequence>
<dbReference type="EC" id="1.17.1.8" evidence="1"/>
<dbReference type="EMBL" id="CP000107">
    <property type="protein sequence ID" value="AAZ68613.1"/>
    <property type="molecule type" value="Genomic_DNA"/>
</dbReference>
<dbReference type="RefSeq" id="WP_011304691.1">
    <property type="nucleotide sequence ID" value="NC_007354.1"/>
</dbReference>
<dbReference type="SMR" id="Q3YRP2"/>
<dbReference type="FunCoup" id="Q3YRP2">
    <property type="interactions" value="290"/>
</dbReference>
<dbReference type="STRING" id="269484.Ecaj_0579"/>
<dbReference type="KEGG" id="ecn:Ecaj_0579"/>
<dbReference type="eggNOG" id="COG0289">
    <property type="taxonomic scope" value="Bacteria"/>
</dbReference>
<dbReference type="HOGENOM" id="CLU_047479_2_1_5"/>
<dbReference type="InParanoid" id="Q3YRP2"/>
<dbReference type="UniPathway" id="UPA00034">
    <property type="reaction ID" value="UER00018"/>
</dbReference>
<dbReference type="Proteomes" id="UP000000435">
    <property type="component" value="Chromosome"/>
</dbReference>
<dbReference type="GO" id="GO:0005737">
    <property type="term" value="C:cytoplasm"/>
    <property type="evidence" value="ECO:0007669"/>
    <property type="project" value="UniProtKB-SubCell"/>
</dbReference>
<dbReference type="GO" id="GO:0008839">
    <property type="term" value="F:4-hydroxy-tetrahydrodipicolinate reductase"/>
    <property type="evidence" value="ECO:0007669"/>
    <property type="project" value="UniProtKB-EC"/>
</dbReference>
<dbReference type="GO" id="GO:0051287">
    <property type="term" value="F:NAD binding"/>
    <property type="evidence" value="ECO:0007669"/>
    <property type="project" value="UniProtKB-UniRule"/>
</dbReference>
<dbReference type="GO" id="GO:0050661">
    <property type="term" value="F:NADP binding"/>
    <property type="evidence" value="ECO:0007669"/>
    <property type="project" value="UniProtKB-UniRule"/>
</dbReference>
<dbReference type="GO" id="GO:0016726">
    <property type="term" value="F:oxidoreductase activity, acting on CH or CH2 groups, NAD or NADP as acceptor"/>
    <property type="evidence" value="ECO:0007669"/>
    <property type="project" value="UniProtKB-UniRule"/>
</dbReference>
<dbReference type="GO" id="GO:0019877">
    <property type="term" value="P:diaminopimelate biosynthetic process"/>
    <property type="evidence" value="ECO:0007669"/>
    <property type="project" value="UniProtKB-UniRule"/>
</dbReference>
<dbReference type="GO" id="GO:0009089">
    <property type="term" value="P:lysine biosynthetic process via diaminopimelate"/>
    <property type="evidence" value="ECO:0007669"/>
    <property type="project" value="UniProtKB-UniRule"/>
</dbReference>
<dbReference type="CDD" id="cd02274">
    <property type="entry name" value="DHDPR_N"/>
    <property type="match status" value="1"/>
</dbReference>
<dbReference type="Gene3D" id="3.30.360.10">
    <property type="entry name" value="Dihydrodipicolinate Reductase, domain 2"/>
    <property type="match status" value="1"/>
</dbReference>
<dbReference type="Gene3D" id="3.40.50.720">
    <property type="entry name" value="NAD(P)-binding Rossmann-like Domain"/>
    <property type="match status" value="1"/>
</dbReference>
<dbReference type="HAMAP" id="MF_00102">
    <property type="entry name" value="DapB"/>
    <property type="match status" value="1"/>
</dbReference>
<dbReference type="InterPro" id="IPR022663">
    <property type="entry name" value="DapB_C"/>
</dbReference>
<dbReference type="InterPro" id="IPR000846">
    <property type="entry name" value="DapB_N"/>
</dbReference>
<dbReference type="InterPro" id="IPR022664">
    <property type="entry name" value="DapB_N_CS"/>
</dbReference>
<dbReference type="InterPro" id="IPR023940">
    <property type="entry name" value="DHDPR_bac"/>
</dbReference>
<dbReference type="InterPro" id="IPR036291">
    <property type="entry name" value="NAD(P)-bd_dom_sf"/>
</dbReference>
<dbReference type="NCBIfam" id="TIGR00036">
    <property type="entry name" value="dapB"/>
    <property type="match status" value="1"/>
</dbReference>
<dbReference type="PANTHER" id="PTHR20836:SF0">
    <property type="entry name" value="4-HYDROXY-TETRAHYDRODIPICOLINATE REDUCTASE 1, CHLOROPLASTIC-RELATED"/>
    <property type="match status" value="1"/>
</dbReference>
<dbReference type="PANTHER" id="PTHR20836">
    <property type="entry name" value="DIHYDRODIPICOLINATE REDUCTASE"/>
    <property type="match status" value="1"/>
</dbReference>
<dbReference type="Pfam" id="PF05173">
    <property type="entry name" value="DapB_C"/>
    <property type="match status" value="1"/>
</dbReference>
<dbReference type="Pfam" id="PF01113">
    <property type="entry name" value="DapB_N"/>
    <property type="match status" value="1"/>
</dbReference>
<dbReference type="PIRSF" id="PIRSF000161">
    <property type="entry name" value="DHPR"/>
    <property type="match status" value="1"/>
</dbReference>
<dbReference type="SUPFAM" id="SSF55347">
    <property type="entry name" value="Glyceraldehyde-3-phosphate dehydrogenase-like, C-terminal domain"/>
    <property type="match status" value="1"/>
</dbReference>
<dbReference type="SUPFAM" id="SSF51735">
    <property type="entry name" value="NAD(P)-binding Rossmann-fold domains"/>
    <property type="match status" value="1"/>
</dbReference>
<dbReference type="PROSITE" id="PS01298">
    <property type="entry name" value="DAPB"/>
    <property type="match status" value="1"/>
</dbReference>
<accession>Q3YRP2</accession>
<protein>
    <recommendedName>
        <fullName evidence="1">4-hydroxy-tetrahydrodipicolinate reductase</fullName>
        <shortName evidence="1">HTPA reductase</shortName>
        <ecNumber evidence="1">1.17.1.8</ecNumber>
    </recommendedName>
</protein>
<name>DAPB_EHRCJ</name>
<keyword id="KW-0028">Amino-acid biosynthesis</keyword>
<keyword id="KW-0963">Cytoplasm</keyword>
<keyword id="KW-0220">Diaminopimelate biosynthesis</keyword>
<keyword id="KW-0457">Lysine biosynthesis</keyword>
<keyword id="KW-0520">NAD</keyword>
<keyword id="KW-0521">NADP</keyword>
<keyword id="KW-0560">Oxidoreductase</keyword>
<feature type="chain" id="PRO_1000093967" description="4-hydroxy-tetrahydrodipicolinate reductase">
    <location>
        <begin position="1"/>
        <end position="267"/>
    </location>
</feature>
<feature type="active site" description="Proton donor/acceptor" evidence="1">
    <location>
        <position position="154"/>
    </location>
</feature>
<feature type="active site" description="Proton donor" evidence="1">
    <location>
        <position position="158"/>
    </location>
</feature>
<feature type="binding site" evidence="1">
    <location>
        <begin position="10"/>
        <end position="15"/>
    </location>
    <ligand>
        <name>NAD(+)</name>
        <dbReference type="ChEBI" id="CHEBI:57540"/>
    </ligand>
</feature>
<feature type="binding site" evidence="1">
    <location>
        <position position="37"/>
    </location>
    <ligand>
        <name>NADP(+)</name>
        <dbReference type="ChEBI" id="CHEBI:58349"/>
    </ligand>
</feature>
<feature type="binding site" evidence="1">
    <location>
        <begin position="99"/>
        <end position="101"/>
    </location>
    <ligand>
        <name>NAD(+)</name>
        <dbReference type="ChEBI" id="CHEBI:57540"/>
    </ligand>
</feature>
<feature type="binding site" evidence="1">
    <location>
        <begin position="122"/>
        <end position="125"/>
    </location>
    <ligand>
        <name>NAD(+)</name>
        <dbReference type="ChEBI" id="CHEBI:57540"/>
    </ligand>
</feature>
<feature type="binding site" evidence="1">
    <location>
        <position position="155"/>
    </location>
    <ligand>
        <name>(S)-2,3,4,5-tetrahydrodipicolinate</name>
        <dbReference type="ChEBI" id="CHEBI:16845"/>
    </ligand>
</feature>
<feature type="binding site" evidence="1">
    <location>
        <begin position="164"/>
        <end position="165"/>
    </location>
    <ligand>
        <name>(S)-2,3,4,5-tetrahydrodipicolinate</name>
        <dbReference type="ChEBI" id="CHEBI:16845"/>
    </ligand>
</feature>
<reference key="1">
    <citation type="journal article" date="2006" name="J. Bacteriol.">
        <title>The genome of the obligately intracellular bacterium Ehrlichia canis reveals themes of complex membrane structure and immune evasion strategies.</title>
        <authorList>
            <person name="Mavromatis K."/>
            <person name="Doyle C.K."/>
            <person name="Lykidis A."/>
            <person name="Ivanova N."/>
            <person name="Francino M.P."/>
            <person name="Chain P."/>
            <person name="Shin M."/>
            <person name="Malfatti S."/>
            <person name="Larimer F."/>
            <person name="Copeland A."/>
            <person name="Detter J.C."/>
            <person name="Land M."/>
            <person name="Richardson P.M."/>
            <person name="Yu X.J."/>
            <person name="Walker D.H."/>
            <person name="McBride J.W."/>
            <person name="Kyrpides N.C."/>
        </authorList>
    </citation>
    <scope>NUCLEOTIDE SEQUENCE [LARGE SCALE GENOMIC DNA]</scope>
    <source>
        <strain>Jake</strain>
    </source>
</reference>
<evidence type="ECO:0000255" key="1">
    <source>
        <dbReference type="HAMAP-Rule" id="MF_00102"/>
    </source>
</evidence>
<evidence type="ECO:0000305" key="2"/>